<comment type="function">
    <text evidence="1">Protect the extracellular space from toxic effect of reactive oxygen intermediates by converting superoxyde radicals into hydrogen peroxyde and oxygen.</text>
</comment>
<comment type="catalytic activity">
    <reaction>
        <text>2 superoxide + 2 H(+) = H2O2 + O2</text>
        <dbReference type="Rhea" id="RHEA:20696"/>
        <dbReference type="ChEBI" id="CHEBI:15378"/>
        <dbReference type="ChEBI" id="CHEBI:15379"/>
        <dbReference type="ChEBI" id="CHEBI:16240"/>
        <dbReference type="ChEBI" id="CHEBI:18421"/>
        <dbReference type="EC" id="1.15.1.1"/>
    </reaction>
</comment>
<comment type="cofactor">
    <cofactor evidence="1">
        <name>Cu cation</name>
        <dbReference type="ChEBI" id="CHEBI:23378"/>
    </cofactor>
    <text evidence="1">Binds 1 copper ion per subunit.</text>
</comment>
<comment type="cofactor">
    <cofactor evidence="1">
        <name>Zn(2+)</name>
        <dbReference type="ChEBI" id="CHEBI:29105"/>
    </cofactor>
    <text evidence="1">Binds 1 zinc ion per subunit.</text>
</comment>
<comment type="subcellular location">
    <subcellularLocation>
        <location evidence="4">Cell membrane</location>
        <topology evidence="4">Single-pass type I membrane protein</topology>
        <orientation evidence="4">Extracellular side</orientation>
    </subcellularLocation>
</comment>
<comment type="similarity">
    <text evidence="4">Belongs to the Cu-Zn superoxide dismutase family.</text>
</comment>
<accession>Q54RN1</accession>
<accession>Q52KB1</accession>
<sequence>MNKLIISLLIVLSAISIISADYQYGYCKFGSVGTVNQNITGYVTLTAQDGALNLVYNISSINLPTGSYATAIMTYGYNPSNNTDLGGVFQVDGKGTEQCQSGGSRAGDLYNLYVNDNRISSNFDSLTSVSIVDSPNSIIGRSIAIFQESYSCDLLKSSVGTSVGPLTTVVASCIIGIGNSANVPATNGVNTTTGNANTAGAYSSLSNTQYDAMVLLANTTKSPSAAIGGSVLFRSSSNSVSVNGIVSGVAKSVHGFHIHAFGDLTTVDGASIGGHWLSGAQVHAFPENTSRHFGDLGNLCIFDNDFKNAYYYLSTSYFSFSGLVGRGFAVHAARDDGNTYVGGDRVAQGVVALIPKAATTLNQVPSNWKYEVICSNGTYTGESTIEPSPTPSTTPTPTETSQPGTSSYLAPFFVLILSSLISVILIL</sequence>
<gene>
    <name type="primary">sodB</name>
    <name type="ORF">DDB_G0283021</name>
</gene>
<protein>
    <recommendedName>
        <fullName>Extracellular superoxide dismutase [Cu-Zn] 2</fullName>
        <shortName>EC-SOD 2</shortName>
        <ecNumber>1.15.1.1</ecNumber>
    </recommendedName>
</protein>
<dbReference type="EC" id="1.15.1.1"/>
<dbReference type="EMBL" id="AAFI02000049">
    <property type="protein sequence ID" value="EAL65954.1"/>
    <property type="molecule type" value="Genomic_DNA"/>
</dbReference>
<dbReference type="EMBL" id="BR000219">
    <property type="protein sequence ID" value="FAA00021.1"/>
    <property type="molecule type" value="mRNA"/>
</dbReference>
<dbReference type="RefSeq" id="XP_639320.1">
    <property type="nucleotide sequence ID" value="XM_634228.1"/>
</dbReference>
<dbReference type="SMR" id="Q54RN1"/>
<dbReference type="FunCoup" id="Q54RN1">
    <property type="interactions" value="48"/>
</dbReference>
<dbReference type="STRING" id="44689.Q54RN1"/>
<dbReference type="GlyCosmos" id="Q54RN1">
    <property type="glycosylation" value="7 sites, No reported glycans"/>
</dbReference>
<dbReference type="GlyGen" id="Q54RN1">
    <property type="glycosylation" value="8 sites"/>
</dbReference>
<dbReference type="PaxDb" id="44689-DDB0232188"/>
<dbReference type="EnsemblProtists" id="EAL65954">
    <property type="protein sequence ID" value="EAL65954"/>
    <property type="gene ID" value="DDB_G0283021"/>
</dbReference>
<dbReference type="GeneID" id="8623891"/>
<dbReference type="KEGG" id="ddi:DDB_G0283021"/>
<dbReference type="dictyBase" id="DDB_G0283021">
    <property type="gene designation" value="sodB"/>
</dbReference>
<dbReference type="VEuPathDB" id="AmoebaDB:DDB_G0283021"/>
<dbReference type="eggNOG" id="KOG0441">
    <property type="taxonomic scope" value="Eukaryota"/>
</dbReference>
<dbReference type="HOGENOM" id="CLU_676923_0_0_1"/>
<dbReference type="InParanoid" id="Q54RN1"/>
<dbReference type="OMA" id="HAFPENT"/>
<dbReference type="Reactome" id="R-DDI-3299685">
    <property type="pathway name" value="Detoxification of Reactive Oxygen Species"/>
</dbReference>
<dbReference type="PRO" id="PR:Q54RN1"/>
<dbReference type="Proteomes" id="UP000002195">
    <property type="component" value="Chromosome 4"/>
</dbReference>
<dbReference type="GO" id="GO:0005886">
    <property type="term" value="C:plasma membrane"/>
    <property type="evidence" value="ECO:0007669"/>
    <property type="project" value="UniProtKB-SubCell"/>
</dbReference>
<dbReference type="GO" id="GO:0005507">
    <property type="term" value="F:copper ion binding"/>
    <property type="evidence" value="ECO:0000318"/>
    <property type="project" value="GO_Central"/>
</dbReference>
<dbReference type="GO" id="GO:0004784">
    <property type="term" value="F:superoxide dismutase activity"/>
    <property type="evidence" value="ECO:0000318"/>
    <property type="project" value="GO_Central"/>
</dbReference>
<dbReference type="GO" id="GO:0019430">
    <property type="term" value="P:removal of superoxide radicals"/>
    <property type="evidence" value="ECO:0000318"/>
    <property type="project" value="GO_Central"/>
</dbReference>
<dbReference type="GO" id="GO:0042542">
    <property type="term" value="P:response to hydrogen peroxide"/>
    <property type="evidence" value="ECO:0000270"/>
    <property type="project" value="dictyBase"/>
</dbReference>
<dbReference type="GO" id="GO:0006979">
    <property type="term" value="P:response to oxidative stress"/>
    <property type="evidence" value="ECO:0000270"/>
    <property type="project" value="dictyBase"/>
</dbReference>
<dbReference type="GO" id="GO:0009411">
    <property type="term" value="P:response to UV"/>
    <property type="evidence" value="ECO:0000270"/>
    <property type="project" value="dictyBase"/>
</dbReference>
<dbReference type="FunFam" id="2.60.40.200:FF:000017">
    <property type="entry name" value="Extracellular superoxide dismutase [Cu-Zn] 2"/>
    <property type="match status" value="1"/>
</dbReference>
<dbReference type="FunFam" id="2.60.40.200:FF:000016">
    <property type="entry name" value="Extracellular superoxide dismutase [Cu-Zn] 3"/>
    <property type="match status" value="1"/>
</dbReference>
<dbReference type="Gene3D" id="2.60.40.200">
    <property type="entry name" value="Superoxide dismutase, copper/zinc binding domain"/>
    <property type="match status" value="2"/>
</dbReference>
<dbReference type="InterPro" id="IPR036423">
    <property type="entry name" value="SOD-like_Cu/Zn_dom_sf"/>
</dbReference>
<dbReference type="InterPro" id="IPR024134">
    <property type="entry name" value="SOD_Cu/Zn_/chaperone"/>
</dbReference>
<dbReference type="InterPro" id="IPR018152">
    <property type="entry name" value="SOD_Cu/Zn_BS"/>
</dbReference>
<dbReference type="InterPro" id="IPR001424">
    <property type="entry name" value="SOD_Cu_Zn_dom"/>
</dbReference>
<dbReference type="PANTHER" id="PTHR10003">
    <property type="entry name" value="SUPEROXIDE DISMUTASE CU-ZN -RELATED"/>
    <property type="match status" value="1"/>
</dbReference>
<dbReference type="Pfam" id="PF00080">
    <property type="entry name" value="Sod_Cu"/>
    <property type="match status" value="2"/>
</dbReference>
<dbReference type="SUPFAM" id="SSF49329">
    <property type="entry name" value="Cu,Zn superoxide dismutase-like"/>
    <property type="match status" value="2"/>
</dbReference>
<dbReference type="PROSITE" id="PS00087">
    <property type="entry name" value="SOD_CU_ZN_1"/>
    <property type="match status" value="1"/>
</dbReference>
<reference key="1">
    <citation type="journal article" date="2005" name="Nature">
        <title>The genome of the social amoeba Dictyostelium discoideum.</title>
        <authorList>
            <person name="Eichinger L."/>
            <person name="Pachebat J.A."/>
            <person name="Gloeckner G."/>
            <person name="Rajandream M.A."/>
            <person name="Sucgang R."/>
            <person name="Berriman M."/>
            <person name="Song J."/>
            <person name="Olsen R."/>
            <person name="Szafranski K."/>
            <person name="Xu Q."/>
            <person name="Tunggal B."/>
            <person name="Kummerfeld S."/>
            <person name="Madera M."/>
            <person name="Konfortov B.A."/>
            <person name="Rivero F."/>
            <person name="Bankier A.T."/>
            <person name="Lehmann R."/>
            <person name="Hamlin N."/>
            <person name="Davies R."/>
            <person name="Gaudet P."/>
            <person name="Fey P."/>
            <person name="Pilcher K."/>
            <person name="Chen G."/>
            <person name="Saunders D."/>
            <person name="Sodergren E.J."/>
            <person name="Davis P."/>
            <person name="Kerhornou A."/>
            <person name="Nie X."/>
            <person name="Hall N."/>
            <person name="Anjard C."/>
            <person name="Hemphill L."/>
            <person name="Bason N."/>
            <person name="Farbrother P."/>
            <person name="Desany B."/>
            <person name="Just E."/>
            <person name="Morio T."/>
            <person name="Rost R."/>
            <person name="Churcher C.M."/>
            <person name="Cooper J."/>
            <person name="Haydock S."/>
            <person name="van Driessche N."/>
            <person name="Cronin A."/>
            <person name="Goodhead I."/>
            <person name="Muzny D.M."/>
            <person name="Mourier T."/>
            <person name="Pain A."/>
            <person name="Lu M."/>
            <person name="Harper D."/>
            <person name="Lindsay R."/>
            <person name="Hauser H."/>
            <person name="James K.D."/>
            <person name="Quiles M."/>
            <person name="Madan Babu M."/>
            <person name="Saito T."/>
            <person name="Buchrieser C."/>
            <person name="Wardroper A."/>
            <person name="Felder M."/>
            <person name="Thangavelu M."/>
            <person name="Johnson D."/>
            <person name="Knights A."/>
            <person name="Loulseged H."/>
            <person name="Mungall K.L."/>
            <person name="Oliver K."/>
            <person name="Price C."/>
            <person name="Quail M.A."/>
            <person name="Urushihara H."/>
            <person name="Hernandez J."/>
            <person name="Rabbinowitsch E."/>
            <person name="Steffen D."/>
            <person name="Sanders M."/>
            <person name="Ma J."/>
            <person name="Kohara Y."/>
            <person name="Sharp S."/>
            <person name="Simmonds M.N."/>
            <person name="Spiegler S."/>
            <person name="Tivey A."/>
            <person name="Sugano S."/>
            <person name="White B."/>
            <person name="Walker D."/>
            <person name="Woodward J.R."/>
            <person name="Winckler T."/>
            <person name="Tanaka Y."/>
            <person name="Shaulsky G."/>
            <person name="Schleicher M."/>
            <person name="Weinstock G.M."/>
            <person name="Rosenthal A."/>
            <person name="Cox E.C."/>
            <person name="Chisholm R.L."/>
            <person name="Gibbs R.A."/>
            <person name="Loomis W.F."/>
            <person name="Platzer M."/>
            <person name="Kay R.R."/>
            <person name="Williams J.G."/>
            <person name="Dear P.H."/>
            <person name="Noegel A.A."/>
            <person name="Barrell B.G."/>
            <person name="Kuspa A."/>
        </authorList>
    </citation>
    <scope>NUCLEOTIDE SEQUENCE [LARGE SCALE GENOMIC DNA]</scope>
    <source>
        <strain>AX4</strain>
    </source>
</reference>
<reference key="2">
    <citation type="journal article" date="2002" name="J. Biochem. Mol. Biol. Biophys.">
        <title>Copper/zinc superoxide dismutases in Dictyostelium discoideum: amino acid sequences and expression kinetics.</title>
        <authorList>
            <person name="Tsuji A."/>
            <person name="Akaza Y."/>
            <person name="Kodaira K."/>
            <person name="Yasukawa H."/>
        </authorList>
    </citation>
    <scope>IDENTIFICATION</scope>
</reference>
<name>SODC2_DICDI</name>
<organism>
    <name type="scientific">Dictyostelium discoideum</name>
    <name type="common">Social amoeba</name>
    <dbReference type="NCBI Taxonomy" id="44689"/>
    <lineage>
        <taxon>Eukaryota</taxon>
        <taxon>Amoebozoa</taxon>
        <taxon>Evosea</taxon>
        <taxon>Eumycetozoa</taxon>
        <taxon>Dictyostelia</taxon>
        <taxon>Dictyosteliales</taxon>
        <taxon>Dictyosteliaceae</taxon>
        <taxon>Dictyostelium</taxon>
    </lineage>
</organism>
<keyword id="KW-0049">Antioxidant</keyword>
<keyword id="KW-1003">Cell membrane</keyword>
<keyword id="KW-0186">Copper</keyword>
<keyword id="KW-0318">Glutathionylation</keyword>
<keyword id="KW-0325">Glycoprotein</keyword>
<keyword id="KW-0472">Membrane</keyword>
<keyword id="KW-0479">Metal-binding</keyword>
<keyword id="KW-0560">Oxidoreductase</keyword>
<keyword id="KW-1185">Reference proteome</keyword>
<keyword id="KW-0732">Signal</keyword>
<keyword id="KW-0812">Transmembrane</keyword>
<keyword id="KW-1133">Transmembrane helix</keyword>
<keyword id="KW-0862">Zinc</keyword>
<evidence type="ECO:0000250" key="1"/>
<evidence type="ECO:0000255" key="2"/>
<evidence type="ECO:0000256" key="3">
    <source>
        <dbReference type="SAM" id="MobiDB-lite"/>
    </source>
</evidence>
<evidence type="ECO:0000305" key="4"/>
<proteinExistence type="evidence at transcript level"/>
<feature type="signal peptide" evidence="2">
    <location>
        <begin position="1"/>
        <end position="20"/>
    </location>
</feature>
<feature type="chain" id="PRO_0000327852" description="Extracellular superoxide dismutase [Cu-Zn] 2">
    <location>
        <begin position="21"/>
        <end position="427"/>
    </location>
</feature>
<feature type="topological domain" description="Extracellular" evidence="2">
    <location>
        <begin position="21"/>
        <end position="406"/>
    </location>
</feature>
<feature type="transmembrane region" description="Helical" evidence="2">
    <location>
        <begin position="407"/>
        <end position="426"/>
    </location>
</feature>
<feature type="topological domain" description="Cytoplasmic" evidence="2">
    <location>
        <position position="427"/>
    </location>
</feature>
<feature type="region of interest" description="Disordered" evidence="3">
    <location>
        <begin position="381"/>
        <end position="404"/>
    </location>
</feature>
<feature type="compositionally biased region" description="Low complexity" evidence="3">
    <location>
        <begin position="395"/>
        <end position="404"/>
    </location>
</feature>
<feature type="binding site" evidence="1">
    <location>
        <position position="257"/>
    </location>
    <ligand>
        <name>Cu cation</name>
        <dbReference type="ChEBI" id="CHEBI:23378"/>
        <note>catalytic</note>
    </ligand>
</feature>
<feature type="binding site" evidence="1">
    <location>
        <position position="259"/>
    </location>
    <ligand>
        <name>Cu cation</name>
        <dbReference type="ChEBI" id="CHEBI:23378"/>
        <note>catalytic</note>
    </ligand>
</feature>
<feature type="binding site" evidence="1">
    <location>
        <position position="275"/>
    </location>
    <ligand>
        <name>Cu cation</name>
        <dbReference type="ChEBI" id="CHEBI:23378"/>
        <note>catalytic</note>
    </ligand>
</feature>
<feature type="binding site" evidence="1">
    <location>
        <position position="275"/>
    </location>
    <ligand>
        <name>Zn(2+)</name>
        <dbReference type="ChEBI" id="CHEBI:29105"/>
        <note>structural</note>
    </ligand>
</feature>
<feature type="binding site" evidence="1">
    <location>
        <position position="283"/>
    </location>
    <ligand>
        <name>Zn(2+)</name>
        <dbReference type="ChEBI" id="CHEBI:29105"/>
        <note>structural</note>
    </ligand>
</feature>
<feature type="binding site" evidence="1">
    <location>
        <position position="292"/>
    </location>
    <ligand>
        <name>Zn(2+)</name>
        <dbReference type="ChEBI" id="CHEBI:29105"/>
        <note>structural</note>
    </ligand>
</feature>
<feature type="binding site" evidence="1">
    <location>
        <position position="295"/>
    </location>
    <ligand>
        <name>Zn(2+)</name>
        <dbReference type="ChEBI" id="CHEBI:29105"/>
        <note>structural</note>
    </ligand>
</feature>
<feature type="binding site" evidence="1">
    <location>
        <position position="331"/>
    </location>
    <ligand>
        <name>Cu cation</name>
        <dbReference type="ChEBI" id="CHEBI:23378"/>
        <note>catalytic</note>
    </ligand>
</feature>
<feature type="glycosylation site" description="N-linked (GlcNAc...) asparagine" evidence="2">
    <location>
        <position position="38"/>
    </location>
</feature>
<feature type="glycosylation site" description="N-linked (GlcNAc...) asparagine" evidence="2">
    <location>
        <position position="57"/>
    </location>
</feature>
<feature type="glycosylation site" description="N-linked (GlcNAc...) asparagine" evidence="2">
    <location>
        <position position="81"/>
    </location>
</feature>
<feature type="glycosylation site" description="N-linked (GlcNAc...) asparagine" evidence="2">
    <location>
        <position position="190"/>
    </location>
</feature>
<feature type="glycosylation site" description="N-linked (GlcNAc...) asparagine" evidence="2">
    <location>
        <position position="218"/>
    </location>
</feature>
<feature type="glycosylation site" description="N-linked (GlcNAc...) asparagine" evidence="2">
    <location>
        <position position="288"/>
    </location>
</feature>
<feature type="glycosylation site" description="N-linked (GlcNAc...) asparagine" evidence="2">
    <location>
        <position position="376"/>
    </location>
</feature>